<reference key="1">
    <citation type="journal article" date="2005" name="J. Bacteriol.">
        <title>Whole-genome sequence analysis of Pseudomonas syringae pv. phaseolicola 1448A reveals divergence among pathovars in genes involved in virulence and transposition.</title>
        <authorList>
            <person name="Joardar V."/>
            <person name="Lindeberg M."/>
            <person name="Jackson R.W."/>
            <person name="Selengut J."/>
            <person name="Dodson R."/>
            <person name="Brinkac L.M."/>
            <person name="Daugherty S.C."/>
            <person name="DeBoy R.T."/>
            <person name="Durkin A.S."/>
            <person name="Gwinn Giglio M."/>
            <person name="Madupu R."/>
            <person name="Nelson W.C."/>
            <person name="Rosovitz M.J."/>
            <person name="Sullivan S.A."/>
            <person name="Crabtree J."/>
            <person name="Creasy T."/>
            <person name="Davidsen T.M."/>
            <person name="Haft D.H."/>
            <person name="Zafar N."/>
            <person name="Zhou L."/>
            <person name="Halpin R."/>
            <person name="Holley T."/>
            <person name="Khouri H.M."/>
            <person name="Feldblyum T.V."/>
            <person name="White O."/>
            <person name="Fraser C.M."/>
            <person name="Chatterjee A.K."/>
            <person name="Cartinhour S."/>
            <person name="Schneider D."/>
            <person name="Mansfield J.W."/>
            <person name="Collmer A."/>
            <person name="Buell R."/>
        </authorList>
    </citation>
    <scope>NUCLEOTIDE SEQUENCE [LARGE SCALE GENOMIC DNA]</scope>
    <source>
        <strain>1448A / Race 6</strain>
    </source>
</reference>
<protein>
    <recommendedName>
        <fullName evidence="1">tRNA U34 carboxymethyltransferase</fullName>
        <ecNumber evidence="1">2.5.1.-</ecNumber>
    </recommendedName>
</protein>
<feature type="chain" id="PRO_0000313951" description="tRNA U34 carboxymethyltransferase">
    <location>
        <begin position="1"/>
        <end position="319"/>
    </location>
</feature>
<feature type="binding site" evidence="1">
    <location>
        <position position="88"/>
    </location>
    <ligand>
        <name>carboxy-S-adenosyl-L-methionine</name>
        <dbReference type="ChEBI" id="CHEBI:134278"/>
    </ligand>
</feature>
<feature type="binding site" evidence="1">
    <location>
        <position position="102"/>
    </location>
    <ligand>
        <name>carboxy-S-adenosyl-L-methionine</name>
        <dbReference type="ChEBI" id="CHEBI:134278"/>
    </ligand>
</feature>
<feature type="binding site" evidence="1">
    <location>
        <position position="107"/>
    </location>
    <ligand>
        <name>carboxy-S-adenosyl-L-methionine</name>
        <dbReference type="ChEBI" id="CHEBI:134278"/>
    </ligand>
</feature>
<feature type="binding site" evidence="1">
    <location>
        <position position="126"/>
    </location>
    <ligand>
        <name>carboxy-S-adenosyl-L-methionine</name>
        <dbReference type="ChEBI" id="CHEBI:134278"/>
    </ligand>
</feature>
<feature type="binding site" evidence="1">
    <location>
        <begin position="176"/>
        <end position="177"/>
    </location>
    <ligand>
        <name>carboxy-S-adenosyl-L-methionine</name>
        <dbReference type="ChEBI" id="CHEBI:134278"/>
    </ligand>
</feature>
<feature type="binding site" evidence="1">
    <location>
        <position position="192"/>
    </location>
    <ligand>
        <name>carboxy-S-adenosyl-L-methionine</name>
        <dbReference type="ChEBI" id="CHEBI:134278"/>
    </ligand>
</feature>
<feature type="binding site" evidence="1">
    <location>
        <position position="196"/>
    </location>
    <ligand>
        <name>carboxy-S-adenosyl-L-methionine</name>
        <dbReference type="ChEBI" id="CHEBI:134278"/>
    </ligand>
</feature>
<feature type="binding site" evidence="1">
    <location>
        <position position="311"/>
    </location>
    <ligand>
        <name>carboxy-S-adenosyl-L-methionine</name>
        <dbReference type="ChEBI" id="CHEBI:134278"/>
    </ligand>
</feature>
<accession>Q48EV7</accession>
<gene>
    <name evidence="1" type="primary">cmoB</name>
    <name type="ordered locus">PSPPH_3944</name>
</gene>
<name>CMOB_PSE14</name>
<comment type="function">
    <text evidence="1">Catalyzes carboxymethyl transfer from carboxy-S-adenosyl-L-methionine (Cx-SAM) to 5-hydroxyuridine (ho5U) to form 5-carboxymethoxyuridine (cmo5U) at position 34 in tRNAs.</text>
</comment>
<comment type="catalytic activity">
    <reaction evidence="1">
        <text>carboxy-S-adenosyl-L-methionine + 5-hydroxyuridine(34) in tRNA = 5-carboxymethoxyuridine(34) in tRNA + S-adenosyl-L-homocysteine + H(+)</text>
        <dbReference type="Rhea" id="RHEA:52848"/>
        <dbReference type="Rhea" id="RHEA-COMP:13381"/>
        <dbReference type="Rhea" id="RHEA-COMP:13383"/>
        <dbReference type="ChEBI" id="CHEBI:15378"/>
        <dbReference type="ChEBI" id="CHEBI:57856"/>
        <dbReference type="ChEBI" id="CHEBI:134278"/>
        <dbReference type="ChEBI" id="CHEBI:136877"/>
        <dbReference type="ChEBI" id="CHEBI:136879"/>
    </reaction>
</comment>
<comment type="subunit">
    <text evidence="1">Homotetramer.</text>
</comment>
<comment type="similarity">
    <text evidence="1">Belongs to the class I-like SAM-binding methyltransferase superfamily. CmoB family.</text>
</comment>
<evidence type="ECO:0000255" key="1">
    <source>
        <dbReference type="HAMAP-Rule" id="MF_01590"/>
    </source>
</evidence>
<organism>
    <name type="scientific">Pseudomonas savastanoi pv. phaseolicola (strain 1448A / Race 6)</name>
    <name type="common">Pseudomonas syringae pv. phaseolicola (strain 1448A / Race 6)</name>
    <dbReference type="NCBI Taxonomy" id="264730"/>
    <lineage>
        <taxon>Bacteria</taxon>
        <taxon>Pseudomonadati</taxon>
        <taxon>Pseudomonadota</taxon>
        <taxon>Gammaproteobacteria</taxon>
        <taxon>Pseudomonadales</taxon>
        <taxon>Pseudomonadaceae</taxon>
        <taxon>Pseudomonas</taxon>
    </lineage>
</organism>
<dbReference type="EC" id="2.5.1.-" evidence="1"/>
<dbReference type="EMBL" id="CP000058">
    <property type="protein sequence ID" value="AAZ33083.1"/>
    <property type="molecule type" value="Genomic_DNA"/>
</dbReference>
<dbReference type="RefSeq" id="WP_004664058.1">
    <property type="nucleotide sequence ID" value="NC_005773.3"/>
</dbReference>
<dbReference type="SMR" id="Q48EV7"/>
<dbReference type="KEGG" id="psp:PSPPH_3944"/>
<dbReference type="eggNOG" id="COG0500">
    <property type="taxonomic scope" value="Bacteria"/>
</dbReference>
<dbReference type="HOGENOM" id="CLU_052665_0_0_6"/>
<dbReference type="Proteomes" id="UP000000551">
    <property type="component" value="Chromosome"/>
</dbReference>
<dbReference type="GO" id="GO:0008168">
    <property type="term" value="F:methyltransferase activity"/>
    <property type="evidence" value="ECO:0007669"/>
    <property type="project" value="TreeGrafter"/>
</dbReference>
<dbReference type="GO" id="GO:0016765">
    <property type="term" value="F:transferase activity, transferring alkyl or aryl (other than methyl) groups"/>
    <property type="evidence" value="ECO:0007669"/>
    <property type="project" value="UniProtKB-UniRule"/>
</dbReference>
<dbReference type="GO" id="GO:0002098">
    <property type="term" value="P:tRNA wobble uridine modification"/>
    <property type="evidence" value="ECO:0007669"/>
    <property type="project" value="InterPro"/>
</dbReference>
<dbReference type="CDD" id="cd02440">
    <property type="entry name" value="AdoMet_MTases"/>
    <property type="match status" value="1"/>
</dbReference>
<dbReference type="Gene3D" id="3.40.50.150">
    <property type="entry name" value="Vaccinia Virus protein VP39"/>
    <property type="match status" value="1"/>
</dbReference>
<dbReference type="HAMAP" id="MF_01590">
    <property type="entry name" value="tRNA_carboxymethyltr_CmoB"/>
    <property type="match status" value="1"/>
</dbReference>
<dbReference type="InterPro" id="IPR010017">
    <property type="entry name" value="CmoB"/>
</dbReference>
<dbReference type="InterPro" id="IPR027555">
    <property type="entry name" value="Mo5U34_MeTrfas-like"/>
</dbReference>
<dbReference type="InterPro" id="IPR029063">
    <property type="entry name" value="SAM-dependent_MTases_sf"/>
</dbReference>
<dbReference type="NCBIfam" id="NF011650">
    <property type="entry name" value="PRK15068.1"/>
    <property type="match status" value="1"/>
</dbReference>
<dbReference type="NCBIfam" id="TIGR00452">
    <property type="entry name" value="tRNA 5-methoxyuridine(34)/uridine 5-oxyacetic acid(34) synthase CmoB"/>
    <property type="match status" value="1"/>
</dbReference>
<dbReference type="PANTHER" id="PTHR43464">
    <property type="entry name" value="METHYLTRANSFERASE"/>
    <property type="match status" value="1"/>
</dbReference>
<dbReference type="PANTHER" id="PTHR43464:SF95">
    <property type="entry name" value="TRNA U34 CARBOXYMETHYLTRANSFERASE"/>
    <property type="match status" value="1"/>
</dbReference>
<dbReference type="Pfam" id="PF08003">
    <property type="entry name" value="Methyltransf_9"/>
    <property type="match status" value="1"/>
</dbReference>
<dbReference type="SUPFAM" id="SSF53335">
    <property type="entry name" value="S-adenosyl-L-methionine-dependent methyltransferases"/>
    <property type="match status" value="1"/>
</dbReference>
<sequence length="319" mass="36128">MIDLAPLARRLAGTPLADWANGLQAQLDTKMAKGHGDLQRWQSALDALPDLQPERIDLLDSFTLQAECNGETRTVLRKALLGLSPWRKGPFNVFGVHIDTEWRSDWKWSRVSPHLDLKGKRVLDVGCGNGYYQWRMLGAGADSVIGVDPNWLFFCQFQAMQRYLPDLPAWHLPFALEDLPANLEGFDTVFSMGVLYHRKSPIDHLLALKDCLVKGGELVMETLVVPGDVHQVLVPEDRYAQMRNVWFLPSVPALELWMRRAGFTDVRCVDVSHTTIEEQRSTEWMRFQSLSDYLDPADHSKTVEGLPAPMRAVIVGRKP</sequence>
<proteinExistence type="inferred from homology"/>
<keyword id="KW-0808">Transferase</keyword>
<keyword id="KW-0819">tRNA processing</keyword>